<sequence length="319" mass="35382">MSLNFLDFEQPIAELEAKIDSLTAVSRQDEKLDINLDEEVQRLREKSVELTRKIFSDLGAWQIAQLARHPMRPYTLDYVRHIFTDFDELAGDRAYADDKAIVGGIARLDSRPVMIIGHQKGRETKEKIRRNFGMPAPEGYRKALRLMEMADRFNLPLFTFIDTPGAYPGVGAEERGQSEAIAKNLREMSGLRVPVICTVIGEGGSGGALAIGVGDKVNMLQYSTYSVISPEGCASILWKSADKAPIAAEAMGIIASRLKELELIDSIVPEPLGGAHRDVQAIAASLKAQLLDDLSELDGLNTEELLNRRYHRLMNYGYC</sequence>
<dbReference type="EC" id="2.1.3.15" evidence="1"/>
<dbReference type="EMBL" id="AP008232">
    <property type="protein sequence ID" value="BAE75202.1"/>
    <property type="molecule type" value="Genomic_DNA"/>
</dbReference>
<dbReference type="RefSeq" id="WP_011411658.1">
    <property type="nucleotide sequence ID" value="NC_007712.1"/>
</dbReference>
<dbReference type="SMR" id="Q2NRM3"/>
<dbReference type="STRING" id="343509.SG1927"/>
<dbReference type="KEGG" id="sgl:SG1927"/>
<dbReference type="eggNOG" id="COG0825">
    <property type="taxonomic scope" value="Bacteria"/>
</dbReference>
<dbReference type="HOGENOM" id="CLU_015486_0_2_6"/>
<dbReference type="OrthoDB" id="9808023at2"/>
<dbReference type="BioCyc" id="SGLO343509:SGP1_RS17760-MONOMER"/>
<dbReference type="UniPathway" id="UPA00655">
    <property type="reaction ID" value="UER00711"/>
</dbReference>
<dbReference type="Proteomes" id="UP000001932">
    <property type="component" value="Chromosome"/>
</dbReference>
<dbReference type="GO" id="GO:0009317">
    <property type="term" value="C:acetyl-CoA carboxylase complex"/>
    <property type="evidence" value="ECO:0007669"/>
    <property type="project" value="InterPro"/>
</dbReference>
<dbReference type="GO" id="GO:0003989">
    <property type="term" value="F:acetyl-CoA carboxylase activity"/>
    <property type="evidence" value="ECO:0007669"/>
    <property type="project" value="InterPro"/>
</dbReference>
<dbReference type="GO" id="GO:0005524">
    <property type="term" value="F:ATP binding"/>
    <property type="evidence" value="ECO:0007669"/>
    <property type="project" value="UniProtKB-KW"/>
</dbReference>
<dbReference type="GO" id="GO:0016743">
    <property type="term" value="F:carboxyl- or carbamoyltransferase activity"/>
    <property type="evidence" value="ECO:0007669"/>
    <property type="project" value="UniProtKB-UniRule"/>
</dbReference>
<dbReference type="GO" id="GO:0006633">
    <property type="term" value="P:fatty acid biosynthetic process"/>
    <property type="evidence" value="ECO:0007669"/>
    <property type="project" value="UniProtKB-KW"/>
</dbReference>
<dbReference type="GO" id="GO:2001295">
    <property type="term" value="P:malonyl-CoA biosynthetic process"/>
    <property type="evidence" value="ECO:0007669"/>
    <property type="project" value="UniProtKB-UniRule"/>
</dbReference>
<dbReference type="FunFam" id="3.90.226.10:FF:000008">
    <property type="entry name" value="Acetyl-coenzyme A carboxylase carboxyl transferase subunit alpha"/>
    <property type="match status" value="1"/>
</dbReference>
<dbReference type="Gene3D" id="3.90.226.10">
    <property type="entry name" value="2-enoyl-CoA Hydratase, Chain A, domain 1"/>
    <property type="match status" value="1"/>
</dbReference>
<dbReference type="HAMAP" id="MF_00823">
    <property type="entry name" value="AcetylCoA_CT_alpha"/>
    <property type="match status" value="1"/>
</dbReference>
<dbReference type="InterPro" id="IPR001095">
    <property type="entry name" value="Acetyl_CoA_COase_a_su"/>
</dbReference>
<dbReference type="InterPro" id="IPR029045">
    <property type="entry name" value="ClpP/crotonase-like_dom_sf"/>
</dbReference>
<dbReference type="InterPro" id="IPR011763">
    <property type="entry name" value="COA_CT_C"/>
</dbReference>
<dbReference type="NCBIfam" id="TIGR00513">
    <property type="entry name" value="accA"/>
    <property type="match status" value="1"/>
</dbReference>
<dbReference type="NCBIfam" id="NF041504">
    <property type="entry name" value="AccA_sub"/>
    <property type="match status" value="1"/>
</dbReference>
<dbReference type="NCBIfam" id="NF004344">
    <property type="entry name" value="PRK05724.1"/>
    <property type="match status" value="1"/>
</dbReference>
<dbReference type="PANTHER" id="PTHR42853">
    <property type="entry name" value="ACETYL-COENZYME A CARBOXYLASE CARBOXYL TRANSFERASE SUBUNIT ALPHA"/>
    <property type="match status" value="1"/>
</dbReference>
<dbReference type="PANTHER" id="PTHR42853:SF3">
    <property type="entry name" value="ACETYL-COENZYME A CARBOXYLASE CARBOXYL TRANSFERASE SUBUNIT ALPHA, CHLOROPLASTIC"/>
    <property type="match status" value="1"/>
</dbReference>
<dbReference type="Pfam" id="PF03255">
    <property type="entry name" value="ACCA"/>
    <property type="match status" value="1"/>
</dbReference>
<dbReference type="PRINTS" id="PR01069">
    <property type="entry name" value="ACCCTRFRASEA"/>
</dbReference>
<dbReference type="SUPFAM" id="SSF52096">
    <property type="entry name" value="ClpP/crotonase"/>
    <property type="match status" value="1"/>
</dbReference>
<dbReference type="PROSITE" id="PS50989">
    <property type="entry name" value="COA_CT_CTER"/>
    <property type="match status" value="1"/>
</dbReference>
<organism>
    <name type="scientific">Sodalis glossinidius (strain morsitans)</name>
    <dbReference type="NCBI Taxonomy" id="343509"/>
    <lineage>
        <taxon>Bacteria</taxon>
        <taxon>Pseudomonadati</taxon>
        <taxon>Pseudomonadota</taxon>
        <taxon>Gammaproteobacteria</taxon>
        <taxon>Enterobacterales</taxon>
        <taxon>Bruguierivoracaceae</taxon>
        <taxon>Sodalis</taxon>
    </lineage>
</organism>
<accession>Q2NRM3</accession>
<protein>
    <recommendedName>
        <fullName evidence="1">Acetyl-coenzyme A carboxylase carboxyl transferase subunit alpha</fullName>
        <shortName evidence="1">ACCase subunit alpha</shortName>
        <shortName evidence="1">Acetyl-CoA carboxylase carboxyltransferase subunit alpha</shortName>
        <ecNumber evidence="1">2.1.3.15</ecNumber>
    </recommendedName>
</protein>
<reference key="1">
    <citation type="journal article" date="2006" name="Genome Res.">
        <title>Massive genome erosion and functional adaptations provide insights into the symbiotic lifestyle of Sodalis glossinidius in the tsetse host.</title>
        <authorList>
            <person name="Toh H."/>
            <person name="Weiss B.L."/>
            <person name="Perkin S.A.H."/>
            <person name="Yamashita A."/>
            <person name="Oshima K."/>
            <person name="Hattori M."/>
            <person name="Aksoy S."/>
        </authorList>
    </citation>
    <scope>NUCLEOTIDE SEQUENCE [LARGE SCALE GENOMIC DNA]</scope>
    <source>
        <strain>morsitans</strain>
    </source>
</reference>
<gene>
    <name evidence="1" type="primary">accA</name>
    <name type="ordered locus">SG1927</name>
</gene>
<keyword id="KW-0067">ATP-binding</keyword>
<keyword id="KW-0963">Cytoplasm</keyword>
<keyword id="KW-0275">Fatty acid biosynthesis</keyword>
<keyword id="KW-0276">Fatty acid metabolism</keyword>
<keyword id="KW-0444">Lipid biosynthesis</keyword>
<keyword id="KW-0443">Lipid metabolism</keyword>
<keyword id="KW-0547">Nucleotide-binding</keyword>
<keyword id="KW-0808">Transferase</keyword>
<comment type="function">
    <text evidence="1">Component of the acetyl coenzyme A carboxylase (ACC) complex. First, biotin carboxylase catalyzes the carboxylation of biotin on its carrier protein (BCCP) and then the CO(2) group is transferred by the carboxyltransferase to acetyl-CoA to form malonyl-CoA.</text>
</comment>
<comment type="catalytic activity">
    <reaction evidence="1">
        <text>N(6)-carboxybiotinyl-L-lysyl-[protein] + acetyl-CoA = N(6)-biotinyl-L-lysyl-[protein] + malonyl-CoA</text>
        <dbReference type="Rhea" id="RHEA:54728"/>
        <dbReference type="Rhea" id="RHEA-COMP:10505"/>
        <dbReference type="Rhea" id="RHEA-COMP:10506"/>
        <dbReference type="ChEBI" id="CHEBI:57288"/>
        <dbReference type="ChEBI" id="CHEBI:57384"/>
        <dbReference type="ChEBI" id="CHEBI:83144"/>
        <dbReference type="ChEBI" id="CHEBI:83145"/>
        <dbReference type="EC" id="2.1.3.15"/>
    </reaction>
</comment>
<comment type="pathway">
    <text evidence="1">Lipid metabolism; malonyl-CoA biosynthesis; malonyl-CoA from acetyl-CoA: step 1/1.</text>
</comment>
<comment type="subunit">
    <text evidence="1">Acetyl-CoA carboxylase is a heterohexamer composed of biotin carboxyl carrier protein (AccB), biotin carboxylase (AccC) and two subunits each of ACCase subunit alpha (AccA) and ACCase subunit beta (AccD).</text>
</comment>
<comment type="subcellular location">
    <subcellularLocation>
        <location evidence="1">Cytoplasm</location>
    </subcellularLocation>
</comment>
<comment type="similarity">
    <text evidence="1">Belongs to the AccA family.</text>
</comment>
<name>ACCA_SODGM</name>
<feature type="chain" id="PRO_1000062674" description="Acetyl-coenzyme A carboxylase carboxyl transferase subunit alpha">
    <location>
        <begin position="1"/>
        <end position="319"/>
    </location>
</feature>
<feature type="domain" description="CoA carboxyltransferase C-terminal" evidence="2">
    <location>
        <begin position="35"/>
        <end position="296"/>
    </location>
</feature>
<evidence type="ECO:0000255" key="1">
    <source>
        <dbReference type="HAMAP-Rule" id="MF_00823"/>
    </source>
</evidence>
<evidence type="ECO:0000255" key="2">
    <source>
        <dbReference type="PROSITE-ProRule" id="PRU01137"/>
    </source>
</evidence>
<proteinExistence type="inferred from homology"/>